<comment type="subcellular location">
    <subcellularLocation>
        <location evidence="3">Membrane</location>
        <topology evidence="3">Single-pass membrane protein</topology>
    </subcellularLocation>
</comment>
<comment type="similarity">
    <text evidence="3">Belongs to the CYSTM1 family.</text>
</comment>
<name>CYTM1_BOVIN</name>
<protein>
    <recommendedName>
        <fullName>Cysteine-rich and transmembrane domain-containing protein 1</fullName>
    </recommendedName>
</protein>
<feature type="chain" id="PRO_0000296357" description="Cysteine-rich and transmembrane domain-containing protein 1">
    <location>
        <begin position="1"/>
        <end position="103"/>
    </location>
</feature>
<feature type="transmembrane region" description="Helical" evidence="1">
    <location>
        <begin position="80"/>
        <end position="97"/>
    </location>
</feature>
<feature type="region of interest" description="Disordered" evidence="2">
    <location>
        <begin position="1"/>
        <end position="66"/>
    </location>
</feature>
<feature type="compositionally biased region" description="Pro residues" evidence="2">
    <location>
        <begin position="1"/>
        <end position="45"/>
    </location>
</feature>
<feature type="compositionally biased region" description="Low complexity" evidence="2">
    <location>
        <begin position="46"/>
        <end position="56"/>
    </location>
</feature>
<proteinExistence type="inferred from homology"/>
<keyword id="KW-0472">Membrane</keyword>
<keyword id="KW-1185">Reference proteome</keyword>
<keyword id="KW-0812">Transmembrane</keyword>
<keyword id="KW-1133">Transmembrane helix</keyword>
<accession>Q32LK2</accession>
<evidence type="ECO:0000255" key="1"/>
<evidence type="ECO:0000256" key="2">
    <source>
        <dbReference type="SAM" id="MobiDB-lite"/>
    </source>
</evidence>
<evidence type="ECO:0000305" key="3"/>
<reference key="1">
    <citation type="submission" date="2005-11" db="EMBL/GenBank/DDBJ databases">
        <authorList>
            <consortium name="NIH - Mammalian Gene Collection (MGC) project"/>
        </authorList>
    </citation>
    <scope>NUCLEOTIDE SEQUENCE [LARGE SCALE MRNA]</scope>
    <source>
        <strain>Crossbred X Angus</strain>
        <tissue>Liver</tissue>
    </source>
</reference>
<organism>
    <name type="scientific">Bos taurus</name>
    <name type="common">Bovine</name>
    <dbReference type="NCBI Taxonomy" id="9913"/>
    <lineage>
        <taxon>Eukaryota</taxon>
        <taxon>Metazoa</taxon>
        <taxon>Chordata</taxon>
        <taxon>Craniata</taxon>
        <taxon>Vertebrata</taxon>
        <taxon>Euteleostomi</taxon>
        <taxon>Mammalia</taxon>
        <taxon>Eutheria</taxon>
        <taxon>Laurasiatheria</taxon>
        <taxon>Artiodactyla</taxon>
        <taxon>Ruminantia</taxon>
        <taxon>Pecora</taxon>
        <taxon>Bovidae</taxon>
        <taxon>Bovinae</taxon>
        <taxon>Bos</taxon>
    </lineage>
</organism>
<sequence length="103" mass="11124">MNQGNPPPYPGPGPTAPYPPYPSQPMGPGFYPPGPPGGPYPPPQGGYPYQGYPQYGWQGGPQEPPKTTVYVVEDQRRDDLGTSTCLTACWTALCCCCLWDMLT</sequence>
<dbReference type="EMBL" id="BC109536">
    <property type="protein sequence ID" value="AAI09537.1"/>
    <property type="molecule type" value="mRNA"/>
</dbReference>
<dbReference type="RefSeq" id="NP_001071632.1">
    <property type="nucleotide sequence ID" value="NM_001078164.1"/>
</dbReference>
<dbReference type="FunCoup" id="Q32LK2">
    <property type="interactions" value="24"/>
</dbReference>
<dbReference type="STRING" id="9913.ENSBTAP00000022077"/>
<dbReference type="PaxDb" id="9913-ENSBTAP00000022077"/>
<dbReference type="GeneID" id="777789"/>
<dbReference type="KEGG" id="bta:777789"/>
<dbReference type="CTD" id="84418"/>
<dbReference type="VEuPathDB" id="HostDB:ENSBTAG00000016595"/>
<dbReference type="eggNOG" id="ENOG502S4EV">
    <property type="taxonomic scope" value="Eukaryota"/>
</dbReference>
<dbReference type="HOGENOM" id="CLU_155323_0_0_1"/>
<dbReference type="InParanoid" id="Q32LK2"/>
<dbReference type="OMA" id="ETCLTAC"/>
<dbReference type="TreeFam" id="TF332352"/>
<dbReference type="Reactome" id="R-BTA-6798695">
    <property type="pathway name" value="Neutrophil degranulation"/>
</dbReference>
<dbReference type="Proteomes" id="UP000009136">
    <property type="component" value="Chromosome 7"/>
</dbReference>
<dbReference type="Bgee" id="ENSBTAG00000016595">
    <property type="expression patterns" value="Expressed in thyroid gland and 103 other cell types or tissues"/>
</dbReference>
<dbReference type="GO" id="GO:0016020">
    <property type="term" value="C:membrane"/>
    <property type="evidence" value="ECO:0007669"/>
    <property type="project" value="UniProtKB-SubCell"/>
</dbReference>
<dbReference type="InterPro" id="IPR043240">
    <property type="entry name" value="CYSTM1-like"/>
</dbReference>
<dbReference type="PANTHER" id="PTHR47564">
    <property type="entry name" value="CYSTEINE-RICH AND TRANSMEMBRANE DOMAIN-CONTAINING PROTEIN 1"/>
    <property type="match status" value="1"/>
</dbReference>
<dbReference type="PANTHER" id="PTHR47564:SF1">
    <property type="entry name" value="CYSTEINE-RICH AND TRANSMEMBRANE DOMAIN-CONTAINING PROTEIN 1"/>
    <property type="match status" value="1"/>
</dbReference>
<gene>
    <name type="primary">CYSTM1</name>
</gene>